<sequence length="291" mass="31255">MITTEKHAEVRELLDAERAAGRRVAMVGTSGGTHAGHISLVEQAKKECDVVAVFWNGALKLEWASGGVQAYNRDLAHDQALFEAAGVDIFYIPMRDDLYQRPSNTFMAMPGMLRHLTGMPEGEHMELLVTMVATLLNIAGPCLTFFGEKDWQQLVMFQRMAEDLHLPSRVIGCPTRREPDGVAISSRNTKLSPEQRAAAPALYAALTAAADAIAAGERDARAAAEVALARLRPVADPDYIVAVEAATLRPLDTLDPAAEGGPSDGEVRLLASVRFGTTPLVDNIGVTVPTA</sequence>
<reference key="1">
    <citation type="journal article" date="2007" name="Genome Res.">
        <title>Genome characteristics of facultatively symbiotic Frankia sp. strains reflect host range and host plant biogeography.</title>
        <authorList>
            <person name="Normand P."/>
            <person name="Lapierre P."/>
            <person name="Tisa L.S."/>
            <person name="Gogarten J.P."/>
            <person name="Alloisio N."/>
            <person name="Bagnarol E."/>
            <person name="Bassi C.A."/>
            <person name="Berry A.M."/>
            <person name="Bickhart D.M."/>
            <person name="Choisne N."/>
            <person name="Couloux A."/>
            <person name="Cournoyer B."/>
            <person name="Cruveiller S."/>
            <person name="Daubin V."/>
            <person name="Demange N."/>
            <person name="Francino M.P."/>
            <person name="Goltsman E."/>
            <person name="Huang Y."/>
            <person name="Kopp O.R."/>
            <person name="Labarre L."/>
            <person name="Lapidus A."/>
            <person name="Lavire C."/>
            <person name="Marechal J."/>
            <person name="Martinez M."/>
            <person name="Mastronunzio J.E."/>
            <person name="Mullin B.C."/>
            <person name="Niemann J."/>
            <person name="Pujic P."/>
            <person name="Rawnsley T."/>
            <person name="Rouy Z."/>
            <person name="Schenowitz C."/>
            <person name="Sellstedt A."/>
            <person name="Tavares F."/>
            <person name="Tomkins J.P."/>
            <person name="Vallenet D."/>
            <person name="Valverde C."/>
            <person name="Wall L.G."/>
            <person name="Wang Y."/>
            <person name="Medigue C."/>
            <person name="Benson D.R."/>
        </authorList>
    </citation>
    <scope>NUCLEOTIDE SEQUENCE [LARGE SCALE GENOMIC DNA]</scope>
    <source>
        <strain>DSM 45986 / CECT 9034 / ACN14a</strain>
    </source>
</reference>
<dbReference type="EC" id="6.3.2.1" evidence="1"/>
<dbReference type="EMBL" id="CT573213">
    <property type="protein sequence ID" value="CAJ62127.1"/>
    <property type="molecule type" value="Genomic_DNA"/>
</dbReference>
<dbReference type="RefSeq" id="WP_011604626.1">
    <property type="nucleotide sequence ID" value="NC_008278.1"/>
</dbReference>
<dbReference type="SMR" id="Q0RK33"/>
<dbReference type="STRING" id="326424.FRAAL3483"/>
<dbReference type="KEGG" id="fal:FRAAL3483"/>
<dbReference type="eggNOG" id="COG0414">
    <property type="taxonomic scope" value="Bacteria"/>
</dbReference>
<dbReference type="HOGENOM" id="CLU_047148_0_0_11"/>
<dbReference type="OrthoDB" id="9773087at2"/>
<dbReference type="UniPathway" id="UPA00028">
    <property type="reaction ID" value="UER00005"/>
</dbReference>
<dbReference type="Proteomes" id="UP000000657">
    <property type="component" value="Chromosome"/>
</dbReference>
<dbReference type="GO" id="GO:0005829">
    <property type="term" value="C:cytosol"/>
    <property type="evidence" value="ECO:0007669"/>
    <property type="project" value="TreeGrafter"/>
</dbReference>
<dbReference type="GO" id="GO:0005524">
    <property type="term" value="F:ATP binding"/>
    <property type="evidence" value="ECO:0007669"/>
    <property type="project" value="UniProtKB-KW"/>
</dbReference>
<dbReference type="GO" id="GO:0004592">
    <property type="term" value="F:pantoate-beta-alanine ligase activity"/>
    <property type="evidence" value="ECO:0007669"/>
    <property type="project" value="UniProtKB-UniRule"/>
</dbReference>
<dbReference type="GO" id="GO:0015940">
    <property type="term" value="P:pantothenate biosynthetic process"/>
    <property type="evidence" value="ECO:0007669"/>
    <property type="project" value="UniProtKB-UniRule"/>
</dbReference>
<dbReference type="Gene3D" id="3.40.50.620">
    <property type="entry name" value="HUPs"/>
    <property type="match status" value="1"/>
</dbReference>
<dbReference type="Gene3D" id="3.30.1300.10">
    <property type="entry name" value="Pantoate-beta-alanine ligase, C-terminal domain"/>
    <property type="match status" value="1"/>
</dbReference>
<dbReference type="HAMAP" id="MF_00158">
    <property type="entry name" value="PanC"/>
    <property type="match status" value="1"/>
</dbReference>
<dbReference type="InterPro" id="IPR003721">
    <property type="entry name" value="Pantoate_ligase"/>
</dbReference>
<dbReference type="InterPro" id="IPR042176">
    <property type="entry name" value="Pantoate_ligase_C"/>
</dbReference>
<dbReference type="InterPro" id="IPR014729">
    <property type="entry name" value="Rossmann-like_a/b/a_fold"/>
</dbReference>
<dbReference type="PANTHER" id="PTHR21299">
    <property type="entry name" value="CYTIDYLATE KINASE/PANTOATE-BETA-ALANINE LIGASE"/>
    <property type="match status" value="1"/>
</dbReference>
<dbReference type="PANTHER" id="PTHR21299:SF1">
    <property type="entry name" value="PANTOATE--BETA-ALANINE LIGASE"/>
    <property type="match status" value="1"/>
</dbReference>
<dbReference type="Pfam" id="PF02569">
    <property type="entry name" value="Pantoate_ligase"/>
    <property type="match status" value="1"/>
</dbReference>
<dbReference type="SUPFAM" id="SSF52374">
    <property type="entry name" value="Nucleotidylyl transferase"/>
    <property type="match status" value="1"/>
</dbReference>
<name>PANC1_FRAAA</name>
<gene>
    <name evidence="1" type="primary">panC1</name>
    <name type="ordered locus">FRAAL3483</name>
</gene>
<feature type="chain" id="PRO_0000305453" description="Pantothenate synthetase 1">
    <location>
        <begin position="1"/>
        <end position="291"/>
    </location>
</feature>
<feature type="active site" description="Proton donor" evidence="1">
    <location>
        <position position="37"/>
    </location>
</feature>
<feature type="binding site" evidence="1">
    <location>
        <begin position="147"/>
        <end position="150"/>
    </location>
    <ligand>
        <name>ATP</name>
        <dbReference type="ChEBI" id="CHEBI:30616"/>
    </ligand>
</feature>
<feature type="binding site" evidence="1">
    <location>
        <position position="153"/>
    </location>
    <ligand>
        <name>(R)-pantoate</name>
        <dbReference type="ChEBI" id="CHEBI:15980"/>
    </ligand>
</feature>
<feature type="binding site" evidence="1">
    <location>
        <begin position="184"/>
        <end position="187"/>
    </location>
    <ligand>
        <name>ATP</name>
        <dbReference type="ChEBI" id="CHEBI:30616"/>
    </ligand>
</feature>
<organism>
    <name type="scientific">Frankia alni (strain DSM 45986 / CECT 9034 / ACN14a)</name>
    <dbReference type="NCBI Taxonomy" id="326424"/>
    <lineage>
        <taxon>Bacteria</taxon>
        <taxon>Bacillati</taxon>
        <taxon>Actinomycetota</taxon>
        <taxon>Actinomycetes</taxon>
        <taxon>Frankiales</taxon>
        <taxon>Frankiaceae</taxon>
        <taxon>Frankia</taxon>
    </lineage>
</organism>
<protein>
    <recommendedName>
        <fullName evidence="1">Pantothenate synthetase 1</fullName>
        <shortName evidence="1">PS 1</shortName>
        <ecNumber evidence="1">6.3.2.1</ecNumber>
    </recommendedName>
    <alternativeName>
        <fullName evidence="1">Pantoate--beta-alanine ligase 1</fullName>
    </alternativeName>
    <alternativeName>
        <fullName evidence="1">Pantoate-activating enzyme 1</fullName>
    </alternativeName>
</protein>
<accession>Q0RK33</accession>
<proteinExistence type="inferred from homology"/>
<evidence type="ECO:0000255" key="1">
    <source>
        <dbReference type="HAMAP-Rule" id="MF_00158"/>
    </source>
</evidence>
<keyword id="KW-0067">ATP-binding</keyword>
<keyword id="KW-0963">Cytoplasm</keyword>
<keyword id="KW-0436">Ligase</keyword>
<keyword id="KW-0547">Nucleotide-binding</keyword>
<keyword id="KW-0566">Pantothenate biosynthesis</keyword>
<keyword id="KW-1185">Reference proteome</keyword>
<comment type="function">
    <text evidence="1">Catalyzes the condensation of pantoate with beta-alanine in an ATP-dependent reaction via a pantoyl-adenylate intermediate.</text>
</comment>
<comment type="catalytic activity">
    <reaction evidence="1">
        <text>(R)-pantoate + beta-alanine + ATP = (R)-pantothenate + AMP + diphosphate + H(+)</text>
        <dbReference type="Rhea" id="RHEA:10912"/>
        <dbReference type="ChEBI" id="CHEBI:15378"/>
        <dbReference type="ChEBI" id="CHEBI:15980"/>
        <dbReference type="ChEBI" id="CHEBI:29032"/>
        <dbReference type="ChEBI" id="CHEBI:30616"/>
        <dbReference type="ChEBI" id="CHEBI:33019"/>
        <dbReference type="ChEBI" id="CHEBI:57966"/>
        <dbReference type="ChEBI" id="CHEBI:456215"/>
        <dbReference type="EC" id="6.3.2.1"/>
    </reaction>
</comment>
<comment type="pathway">
    <text evidence="1">Cofactor biosynthesis; (R)-pantothenate biosynthesis; (R)-pantothenate from (R)-pantoate and beta-alanine: step 1/1.</text>
</comment>
<comment type="subunit">
    <text evidence="1">Homodimer.</text>
</comment>
<comment type="subcellular location">
    <subcellularLocation>
        <location evidence="1">Cytoplasm</location>
    </subcellularLocation>
</comment>
<comment type="miscellaneous">
    <text evidence="1">The reaction proceeds by a bi uni uni bi ping pong mechanism.</text>
</comment>
<comment type="similarity">
    <text evidence="1">Belongs to the pantothenate synthetase family.</text>
</comment>